<accession>Q9U5Z8</accession>
<sequence length="500" mass="56841">MVSQTATPTATAASEPIVDVEMESAEDAETAKKDAELLAVQEIRDHARQIDKAVVSKEPRFILRVLRSLPTTRRKLALVVVGSLAVQLYPAGPERDGNQWAYIEDYPAGAQEPEGLHDPGSDKSPFAQEVDAYFHLLLLVRLLDKNDLPKATKCSQDLMAKIVGQNRRSLDLIAAKCYFYHSRVSELNNDLESIRSFLHSRLRTATLRNDFEGQAVLINCLLRNYLHYSLYDQADKLVNKSVFPETASNNECARFLYYLGRIKAAKLEYSVAHKQLVQALRKAPQQAAVGFRQTVQKLVIVVELLLGDIPERKVFRQAALRRSLGPYFQLTQAVRMGNLQRFGEVLENFGEQFRQDHTFTLIIRLRHNVIKTAIRSIGLAYSRISPQDIARKLGLDSPEDAEFIVAKAIRDGVIDATLDPEKGYMRTKESTDIYSTREPQLAFHQRISFCLDLHNQSVKAMRYPPKSYGKELESAEERREREQQDLELAKEMAEEDDDDF</sequence>
<comment type="function">
    <text evidence="1">Acts as a regulatory subunit of the 26 proteasome which is involved in the ATP-dependent degradation of ubiquitinated proteins.</text>
</comment>
<comment type="subunit">
    <text evidence="1">The 26S proteasome is composed of a core protease, known as the 20S proteasome, capped at one or both ends by the 19S regulatory complex (RC). The RC is composed of at least 18 different subunits in two subcomplexes, the base and the lid, which form the portions proximal and distal to the 20S proteolytic core, respectively (By similarity).</text>
</comment>
<comment type="similarity">
    <text evidence="4">Belongs to the proteasome subunit S3 family.</text>
</comment>
<comment type="caution">
    <text evidence="5">Was originally thought to be the diphenol oxidase A2 component involved in catecholamine metabolism, melanin formation and sclerotization of the cuticle.</text>
</comment>
<organism>
    <name type="scientific">Anopheles stephensi</name>
    <name type="common">Indo-Pakistan malaria mosquito</name>
    <dbReference type="NCBI Taxonomy" id="30069"/>
    <lineage>
        <taxon>Eukaryota</taxon>
        <taxon>Metazoa</taxon>
        <taxon>Ecdysozoa</taxon>
        <taxon>Arthropoda</taxon>
        <taxon>Hexapoda</taxon>
        <taxon>Insecta</taxon>
        <taxon>Pterygota</taxon>
        <taxon>Neoptera</taxon>
        <taxon>Endopterygota</taxon>
        <taxon>Diptera</taxon>
        <taxon>Nematocera</taxon>
        <taxon>Culicoidea</taxon>
        <taxon>Culicidae</taxon>
        <taxon>Anophelinae</taxon>
        <taxon>Anopheles</taxon>
    </lineage>
</organism>
<evidence type="ECO:0000250" key="1"/>
<evidence type="ECO:0000255" key="2">
    <source>
        <dbReference type="PROSITE-ProRule" id="PRU01185"/>
    </source>
</evidence>
<evidence type="ECO:0000256" key="3">
    <source>
        <dbReference type="SAM" id="MobiDB-lite"/>
    </source>
</evidence>
<evidence type="ECO:0000305" key="4"/>
<evidence type="ECO:0000305" key="5">
    <source>
    </source>
</evidence>
<keyword id="KW-0647">Proteasome</keyword>
<keyword id="KW-1185">Reference proteome</keyword>
<protein>
    <recommendedName>
        <fullName>Probable 26S proteasome non-ATPase regulatory subunit 3</fullName>
        <shortName>26S proteasome subunit S3</shortName>
    </recommendedName>
    <alternativeName>
        <fullName>26S proteasome regulatory subunit RPN3</fullName>
    </alternativeName>
    <alternativeName>
        <fullName>Diphenol oxidase A2 component</fullName>
        <shortName>DOX-A2</shortName>
    </alternativeName>
</protein>
<dbReference type="EMBL" id="AJ250874">
    <property type="protein sequence ID" value="CAB61220.1"/>
    <property type="molecule type" value="Genomic_DNA"/>
</dbReference>
<dbReference type="SMR" id="Q9U5Z8"/>
<dbReference type="STRING" id="30069.Q9U5Z8"/>
<dbReference type="VEuPathDB" id="VectorBase:ASTE010126"/>
<dbReference type="VEuPathDB" id="VectorBase:ASTEI071952"/>
<dbReference type="VEuPathDB" id="VectorBase:ASTEI20_039459"/>
<dbReference type="Proteomes" id="UP000076408">
    <property type="component" value="Unassembled WGS sequence"/>
</dbReference>
<dbReference type="GO" id="GO:0008541">
    <property type="term" value="C:proteasome regulatory particle, lid subcomplex"/>
    <property type="evidence" value="ECO:0007669"/>
    <property type="project" value="TreeGrafter"/>
</dbReference>
<dbReference type="GO" id="GO:0030234">
    <property type="term" value="F:enzyme regulator activity"/>
    <property type="evidence" value="ECO:0007669"/>
    <property type="project" value="InterPro"/>
</dbReference>
<dbReference type="GO" id="GO:0042176">
    <property type="term" value="P:regulation of protein catabolic process"/>
    <property type="evidence" value="ECO:0007669"/>
    <property type="project" value="InterPro"/>
</dbReference>
<dbReference type="GO" id="GO:0006511">
    <property type="term" value="P:ubiquitin-dependent protein catabolic process"/>
    <property type="evidence" value="ECO:0007669"/>
    <property type="project" value="TreeGrafter"/>
</dbReference>
<dbReference type="FunFam" id="1.25.40.570:FF:000009">
    <property type="entry name" value="26S proteasome non-ATPase regulatory subunit 3"/>
    <property type="match status" value="1"/>
</dbReference>
<dbReference type="Gene3D" id="1.25.40.570">
    <property type="match status" value="1"/>
</dbReference>
<dbReference type="InterPro" id="IPR013586">
    <property type="entry name" value="26S_Psome_reg_C"/>
</dbReference>
<dbReference type="InterPro" id="IPR050756">
    <property type="entry name" value="CSN3"/>
</dbReference>
<dbReference type="InterPro" id="IPR000717">
    <property type="entry name" value="PCI_dom"/>
</dbReference>
<dbReference type="InterPro" id="IPR036390">
    <property type="entry name" value="WH_DNA-bd_sf"/>
</dbReference>
<dbReference type="PANTHER" id="PTHR10758:SF2">
    <property type="entry name" value="26S PROTEASOME NON-ATPASE REGULATORY SUBUNIT 3"/>
    <property type="match status" value="1"/>
</dbReference>
<dbReference type="PANTHER" id="PTHR10758">
    <property type="entry name" value="26S PROTEASOME NON-ATPASE REGULATORY SUBUNIT 3/COP9 SIGNALOSOME COMPLEX SUBUNIT 3"/>
    <property type="match status" value="1"/>
</dbReference>
<dbReference type="Pfam" id="PF01399">
    <property type="entry name" value="PCI"/>
    <property type="match status" value="1"/>
</dbReference>
<dbReference type="Pfam" id="PF08375">
    <property type="entry name" value="Rpn3_C"/>
    <property type="match status" value="1"/>
</dbReference>
<dbReference type="SMART" id="SM00753">
    <property type="entry name" value="PAM"/>
    <property type="match status" value="1"/>
</dbReference>
<dbReference type="SMART" id="SM00088">
    <property type="entry name" value="PINT"/>
    <property type="match status" value="1"/>
</dbReference>
<dbReference type="SUPFAM" id="SSF46785">
    <property type="entry name" value="Winged helix' DNA-binding domain"/>
    <property type="match status" value="1"/>
</dbReference>
<dbReference type="PROSITE" id="PS50250">
    <property type="entry name" value="PCI"/>
    <property type="match status" value="1"/>
</dbReference>
<feature type="chain" id="PRO_0000173820" description="Probable 26S proteasome non-ATPase regulatory subunit 3">
    <location>
        <begin position="1"/>
        <end position="500"/>
    </location>
</feature>
<feature type="domain" description="PCI" evidence="2">
    <location>
        <begin position="253"/>
        <end position="432"/>
    </location>
</feature>
<feature type="region of interest" description="Disordered" evidence="3">
    <location>
        <begin position="462"/>
        <end position="484"/>
    </location>
</feature>
<feature type="compositionally biased region" description="Basic and acidic residues" evidence="3">
    <location>
        <begin position="468"/>
        <end position="484"/>
    </location>
</feature>
<name>PSMD3_ANOST</name>
<proteinExistence type="inferred from homology"/>
<gene>
    <name type="primary">DOXA2</name>
    <name type="synonym">DOX-A2</name>
</gene>
<reference key="1">
    <citation type="journal article" date="2000" name="J. Mol. Evol.">
        <title>Anopheles stephensi Dox-A2 shares common ancestry with genes from distant groups of eukaryotes encoding a 26S proteasome subunit and is in a conserved gene cluster.</title>
        <authorList>
            <person name="Garvey C.F."/>
            <person name="Malcolm C.A."/>
        </authorList>
    </citation>
    <scope>NUCLEOTIDE SEQUENCE [GENOMIC DNA]</scope>
    <source>
        <strain>StMal</strain>
    </source>
</reference>